<gene>
    <name evidence="1" type="primary">rpl16</name>
</gene>
<keyword id="KW-0150">Chloroplast</keyword>
<keyword id="KW-0934">Plastid</keyword>
<keyword id="KW-0687">Ribonucleoprotein</keyword>
<keyword id="KW-0689">Ribosomal protein</keyword>
<protein>
    <recommendedName>
        <fullName evidence="1">Large ribosomal subunit protein uL16c</fullName>
    </recommendedName>
    <alternativeName>
        <fullName evidence="2">50S ribosomal protein L16, chloroplastic</fullName>
    </alternativeName>
</protein>
<geneLocation type="chloroplast"/>
<proteinExistence type="inferred from homology"/>
<dbReference type="EMBL" id="EU262887">
    <property type="protein sequence ID" value="ABW98741.1"/>
    <property type="molecule type" value="Genomic_DNA"/>
</dbReference>
<dbReference type="RefSeq" id="YP_001687174.1">
    <property type="nucleotide sequence ID" value="NC_010358.2"/>
</dbReference>
<dbReference type="SMR" id="B0Z4R3"/>
<dbReference type="GeneID" id="5951903"/>
<dbReference type="GO" id="GO:0009507">
    <property type="term" value="C:chloroplast"/>
    <property type="evidence" value="ECO:0007669"/>
    <property type="project" value="UniProtKB-SubCell"/>
</dbReference>
<dbReference type="GO" id="GO:0005762">
    <property type="term" value="C:mitochondrial large ribosomal subunit"/>
    <property type="evidence" value="ECO:0007669"/>
    <property type="project" value="TreeGrafter"/>
</dbReference>
<dbReference type="GO" id="GO:0019843">
    <property type="term" value="F:rRNA binding"/>
    <property type="evidence" value="ECO:0007669"/>
    <property type="project" value="InterPro"/>
</dbReference>
<dbReference type="GO" id="GO:0003735">
    <property type="term" value="F:structural constituent of ribosome"/>
    <property type="evidence" value="ECO:0007669"/>
    <property type="project" value="InterPro"/>
</dbReference>
<dbReference type="GO" id="GO:0032543">
    <property type="term" value="P:mitochondrial translation"/>
    <property type="evidence" value="ECO:0007669"/>
    <property type="project" value="TreeGrafter"/>
</dbReference>
<dbReference type="CDD" id="cd01433">
    <property type="entry name" value="Ribosomal_L16_L10e"/>
    <property type="match status" value="1"/>
</dbReference>
<dbReference type="FunFam" id="3.90.1170.10:FF:000001">
    <property type="entry name" value="50S ribosomal protein L16"/>
    <property type="match status" value="1"/>
</dbReference>
<dbReference type="Gene3D" id="3.90.1170.10">
    <property type="entry name" value="Ribosomal protein L10e/L16"/>
    <property type="match status" value="1"/>
</dbReference>
<dbReference type="HAMAP" id="MF_01342">
    <property type="entry name" value="Ribosomal_uL16"/>
    <property type="match status" value="1"/>
</dbReference>
<dbReference type="InterPro" id="IPR047873">
    <property type="entry name" value="Ribosomal_uL16"/>
</dbReference>
<dbReference type="InterPro" id="IPR000114">
    <property type="entry name" value="Ribosomal_uL16_bact-type"/>
</dbReference>
<dbReference type="InterPro" id="IPR020798">
    <property type="entry name" value="Ribosomal_uL16_CS"/>
</dbReference>
<dbReference type="InterPro" id="IPR016180">
    <property type="entry name" value="Ribosomal_uL16_dom"/>
</dbReference>
<dbReference type="InterPro" id="IPR036920">
    <property type="entry name" value="Ribosomal_uL16_sf"/>
</dbReference>
<dbReference type="NCBIfam" id="TIGR01164">
    <property type="entry name" value="rplP_bact"/>
    <property type="match status" value="1"/>
</dbReference>
<dbReference type="PANTHER" id="PTHR12220">
    <property type="entry name" value="50S/60S RIBOSOMAL PROTEIN L16"/>
    <property type="match status" value="1"/>
</dbReference>
<dbReference type="PANTHER" id="PTHR12220:SF13">
    <property type="entry name" value="LARGE RIBOSOMAL SUBUNIT PROTEIN UL16M"/>
    <property type="match status" value="1"/>
</dbReference>
<dbReference type="Pfam" id="PF00252">
    <property type="entry name" value="Ribosomal_L16"/>
    <property type="match status" value="1"/>
</dbReference>
<dbReference type="PRINTS" id="PR00060">
    <property type="entry name" value="RIBOSOMALL16"/>
</dbReference>
<dbReference type="SUPFAM" id="SSF54686">
    <property type="entry name" value="Ribosomal protein L16p/L10e"/>
    <property type="match status" value="1"/>
</dbReference>
<dbReference type="PROSITE" id="PS00701">
    <property type="entry name" value="RIBOSOMAL_L16_2"/>
    <property type="match status" value="1"/>
</dbReference>
<organism>
    <name type="scientific">Oenothera argillicola</name>
    <name type="common">Appalachian evening primrose</name>
    <dbReference type="NCBI Taxonomy" id="3940"/>
    <lineage>
        <taxon>Eukaryota</taxon>
        <taxon>Viridiplantae</taxon>
        <taxon>Streptophyta</taxon>
        <taxon>Embryophyta</taxon>
        <taxon>Tracheophyta</taxon>
        <taxon>Spermatophyta</taxon>
        <taxon>Magnoliopsida</taxon>
        <taxon>eudicotyledons</taxon>
        <taxon>Gunneridae</taxon>
        <taxon>Pentapetalae</taxon>
        <taxon>rosids</taxon>
        <taxon>malvids</taxon>
        <taxon>Myrtales</taxon>
        <taxon>Onagraceae</taxon>
        <taxon>Onagroideae</taxon>
        <taxon>Onagreae</taxon>
        <taxon>Oenothera</taxon>
    </lineage>
</organism>
<sequence length="135" mass="15319">MLSPKRTRFRKQHRGRMRGISYRGNRICFGKYALQALEPAWITSRQIEAGRRAMTRNVRRGGKTWVRIFPDKPVTLRAAETRMGSGKGNPEYWVAVVKPGRILYEMGGVAENIARKAISIAASKMPIRTQFIISG</sequence>
<name>RK16_OENAR</name>
<comment type="subunit">
    <text evidence="1">Part of the 50S ribosomal subunit.</text>
</comment>
<comment type="subcellular location">
    <subcellularLocation>
        <location>Plastid</location>
        <location>Chloroplast</location>
    </subcellularLocation>
</comment>
<comment type="similarity">
    <text evidence="1">Belongs to the universal ribosomal protein uL16 family.</text>
</comment>
<reference key="1">
    <citation type="journal article" date="2008" name="Nucleic Acids Res.">
        <title>The complete nucleotide sequences of the five genetically distinct plastid genomes of Oenothera, subsection Oenothera: I. Sequence evaluation and plastome evolution.</title>
        <authorList>
            <person name="Greiner S."/>
            <person name="Wang X."/>
            <person name="Rauwolf U."/>
            <person name="Silber M.V."/>
            <person name="Mayer K."/>
            <person name="Meurer J."/>
            <person name="Haberer G."/>
            <person name="Herrmann R.G."/>
        </authorList>
    </citation>
    <scope>NUCLEOTIDE SEQUENCE [LARGE SCALE GENOMIC DNA]</scope>
    <source>
        <strain>cv. Douthat 1</strain>
    </source>
</reference>
<feature type="chain" id="PRO_0000354650" description="Large ribosomal subunit protein uL16c">
    <location>
        <begin position="1"/>
        <end position="135"/>
    </location>
</feature>
<accession>B0Z4R3</accession>
<evidence type="ECO:0000255" key="1">
    <source>
        <dbReference type="HAMAP-Rule" id="MF_01342"/>
    </source>
</evidence>
<evidence type="ECO:0000305" key="2"/>